<protein>
    <recommendedName>
        <fullName evidence="1">Large ribosomal subunit protein bL17</fullName>
    </recommendedName>
    <alternativeName>
        <fullName evidence="2">50S ribosomal protein L17</fullName>
    </alternativeName>
</protein>
<keyword id="KW-0002">3D-structure</keyword>
<keyword id="KW-0687">Ribonucleoprotein</keyword>
<keyword id="KW-0689">Ribosomal protein</keyword>
<organism>
    <name type="scientific">Thermus thermophilus (strain ATCC BAA-163 / DSM 7039 / HB27)</name>
    <dbReference type="NCBI Taxonomy" id="262724"/>
    <lineage>
        <taxon>Bacteria</taxon>
        <taxon>Thermotogati</taxon>
        <taxon>Deinococcota</taxon>
        <taxon>Deinococci</taxon>
        <taxon>Thermales</taxon>
        <taxon>Thermaceae</taxon>
        <taxon>Thermus</taxon>
    </lineage>
</organism>
<dbReference type="EMBL" id="AE017221">
    <property type="protein sequence ID" value="AAS81641.1"/>
    <property type="molecule type" value="Genomic_DNA"/>
</dbReference>
<dbReference type="RefSeq" id="WP_008633358.1">
    <property type="nucleotide sequence ID" value="NC_005835.1"/>
</dbReference>
<dbReference type="PDB" id="4V4I">
    <property type="method" value="X-ray"/>
    <property type="resolution" value="3.71 A"/>
    <property type="chains" value="L=1-118"/>
</dbReference>
<dbReference type="PDB" id="4V4J">
    <property type="method" value="X-ray"/>
    <property type="resolution" value="3.83 A"/>
    <property type="chains" value="L=1-118"/>
</dbReference>
<dbReference type="PDB" id="4V63">
    <property type="method" value="X-ray"/>
    <property type="resolution" value="3.21 A"/>
    <property type="chains" value="BR/DR=1-118"/>
</dbReference>
<dbReference type="PDB" id="4V67">
    <property type="method" value="X-ray"/>
    <property type="resolution" value="3.00 A"/>
    <property type="chains" value="BR/DR=1-118"/>
</dbReference>
<dbReference type="PDB" id="4V7P">
    <property type="method" value="X-ray"/>
    <property type="resolution" value="3.62 A"/>
    <property type="chains" value="BN/CN=2-118"/>
</dbReference>
<dbReference type="PDB" id="4V83">
    <property type="method" value="X-ray"/>
    <property type="resolution" value="3.50 A"/>
    <property type="chains" value="BN/DN=2-118"/>
</dbReference>
<dbReference type="PDB" id="4V84">
    <property type="method" value="X-ray"/>
    <property type="resolution" value="3.40 A"/>
    <property type="chains" value="BN/DN=2-118"/>
</dbReference>
<dbReference type="PDB" id="4V9J">
    <property type="method" value="X-ray"/>
    <property type="resolution" value="3.86 A"/>
    <property type="chains" value="BR/DR=2-118"/>
</dbReference>
<dbReference type="PDB" id="4V9K">
    <property type="method" value="X-ray"/>
    <property type="resolution" value="3.50 A"/>
    <property type="chains" value="BR/DR=2-118"/>
</dbReference>
<dbReference type="PDB" id="4V9L">
    <property type="method" value="X-ray"/>
    <property type="resolution" value="3.50 A"/>
    <property type="chains" value="BR/DR=2-118"/>
</dbReference>
<dbReference type="PDB" id="4V9M">
    <property type="method" value="X-ray"/>
    <property type="resolution" value="4.00 A"/>
    <property type="chains" value="BR/DR=2-118"/>
</dbReference>
<dbReference type="PDB" id="4V9N">
    <property type="method" value="X-ray"/>
    <property type="resolution" value="3.40 A"/>
    <property type="chains" value="BR/DR=2-118"/>
</dbReference>
<dbReference type="PDB" id="4V9Q">
    <property type="method" value="X-ray"/>
    <property type="resolution" value="3.40 A"/>
    <property type="chains" value="AN/CN=2-118"/>
</dbReference>
<dbReference type="PDB" id="4W29">
    <property type="method" value="X-ray"/>
    <property type="resolution" value="3.80 A"/>
    <property type="chains" value="BR/DR=2-118"/>
</dbReference>
<dbReference type="PDB" id="4XEJ">
    <property type="method" value="X-ray"/>
    <property type="resolution" value="3.80 A"/>
    <property type="chains" value="AL17/BL17=2-118"/>
</dbReference>
<dbReference type="PDB" id="5J4D">
    <property type="method" value="X-ray"/>
    <property type="resolution" value="3.10 A"/>
    <property type="chains" value="O/TB=1-118"/>
</dbReference>
<dbReference type="PDB" id="5V8I">
    <property type="method" value="X-ray"/>
    <property type="resolution" value="3.25 A"/>
    <property type="chains" value="1R/2R=1-118"/>
</dbReference>
<dbReference type="PDB" id="6B4V">
    <property type="method" value="X-ray"/>
    <property type="resolution" value="3.40 A"/>
    <property type="chains" value="O/SB=1-118"/>
</dbReference>
<dbReference type="PDB" id="6BOH">
    <property type="method" value="X-ray"/>
    <property type="resolution" value="3.40 A"/>
    <property type="chains" value="O/TB=1-118"/>
</dbReference>
<dbReference type="PDB" id="6BOK">
    <property type="method" value="X-ray"/>
    <property type="resolution" value="3.55 A"/>
    <property type="chains" value="O/RB=1-118"/>
</dbReference>
<dbReference type="PDB" id="6N1D">
    <property type="method" value="X-ray"/>
    <property type="resolution" value="3.20 A"/>
    <property type="chains" value="AL17/BL17=1-118"/>
</dbReference>
<dbReference type="PDBsum" id="4V4I"/>
<dbReference type="PDBsum" id="4V4J"/>
<dbReference type="PDBsum" id="4V63"/>
<dbReference type="PDBsum" id="4V67"/>
<dbReference type="PDBsum" id="4V7P"/>
<dbReference type="PDBsum" id="4V83"/>
<dbReference type="PDBsum" id="4V84"/>
<dbReference type="PDBsum" id="4V9J"/>
<dbReference type="PDBsum" id="4V9K"/>
<dbReference type="PDBsum" id="4V9L"/>
<dbReference type="PDBsum" id="4V9M"/>
<dbReference type="PDBsum" id="4V9N"/>
<dbReference type="PDBsum" id="4V9Q"/>
<dbReference type="PDBsum" id="4W29"/>
<dbReference type="PDBsum" id="4XEJ"/>
<dbReference type="PDBsum" id="5J4D"/>
<dbReference type="PDBsum" id="5V8I"/>
<dbReference type="PDBsum" id="6B4V"/>
<dbReference type="PDBsum" id="6BOH"/>
<dbReference type="PDBsum" id="6BOK"/>
<dbReference type="PDBsum" id="6N1D"/>
<dbReference type="SMR" id="Q72I33"/>
<dbReference type="IntAct" id="Q72I33">
    <property type="interactions" value="4"/>
</dbReference>
<dbReference type="GeneID" id="3168022"/>
<dbReference type="KEGG" id="tth:TT_C1299"/>
<dbReference type="eggNOG" id="COG0203">
    <property type="taxonomic scope" value="Bacteria"/>
</dbReference>
<dbReference type="HOGENOM" id="CLU_074407_2_0_0"/>
<dbReference type="OrthoDB" id="9809073at2"/>
<dbReference type="Proteomes" id="UP000000592">
    <property type="component" value="Chromosome"/>
</dbReference>
<dbReference type="GO" id="GO:0022625">
    <property type="term" value="C:cytosolic large ribosomal subunit"/>
    <property type="evidence" value="ECO:0007669"/>
    <property type="project" value="TreeGrafter"/>
</dbReference>
<dbReference type="GO" id="GO:0003735">
    <property type="term" value="F:structural constituent of ribosome"/>
    <property type="evidence" value="ECO:0007669"/>
    <property type="project" value="InterPro"/>
</dbReference>
<dbReference type="GO" id="GO:0006412">
    <property type="term" value="P:translation"/>
    <property type="evidence" value="ECO:0007669"/>
    <property type="project" value="UniProtKB-UniRule"/>
</dbReference>
<dbReference type="FunFam" id="3.90.1030.10:FF:000001">
    <property type="entry name" value="50S ribosomal protein L17"/>
    <property type="match status" value="1"/>
</dbReference>
<dbReference type="Gene3D" id="3.90.1030.10">
    <property type="entry name" value="Ribosomal protein L17"/>
    <property type="match status" value="1"/>
</dbReference>
<dbReference type="HAMAP" id="MF_01368">
    <property type="entry name" value="Ribosomal_bL17"/>
    <property type="match status" value="1"/>
</dbReference>
<dbReference type="InterPro" id="IPR000456">
    <property type="entry name" value="Ribosomal_bL17"/>
</dbReference>
<dbReference type="InterPro" id="IPR036373">
    <property type="entry name" value="Ribosomal_bL17_sf"/>
</dbReference>
<dbReference type="NCBIfam" id="TIGR00059">
    <property type="entry name" value="L17"/>
    <property type="match status" value="1"/>
</dbReference>
<dbReference type="PANTHER" id="PTHR14413:SF16">
    <property type="entry name" value="LARGE RIBOSOMAL SUBUNIT PROTEIN BL17M"/>
    <property type="match status" value="1"/>
</dbReference>
<dbReference type="PANTHER" id="PTHR14413">
    <property type="entry name" value="RIBOSOMAL PROTEIN L17"/>
    <property type="match status" value="1"/>
</dbReference>
<dbReference type="Pfam" id="PF01196">
    <property type="entry name" value="Ribosomal_L17"/>
    <property type="match status" value="1"/>
</dbReference>
<dbReference type="SUPFAM" id="SSF64263">
    <property type="entry name" value="Prokaryotic ribosomal protein L17"/>
    <property type="match status" value="1"/>
</dbReference>
<accession>Q72I33</accession>
<gene>
    <name evidence="1" type="primary">rplQ</name>
    <name type="ordered locus">TT_C1299</name>
</gene>
<comment type="subunit">
    <text evidence="1">Part of the 50S ribosomal subunit. Contacts protein L32.</text>
</comment>
<comment type="similarity">
    <text evidence="1">Belongs to the bacterial ribosomal protein bL17 family.</text>
</comment>
<evidence type="ECO:0000255" key="1">
    <source>
        <dbReference type="HAMAP-Rule" id="MF_01368"/>
    </source>
</evidence>
<evidence type="ECO:0000305" key="2"/>
<reference key="1">
    <citation type="journal article" date="2004" name="Nat. Biotechnol.">
        <title>The genome sequence of the extreme thermophile Thermus thermophilus.</title>
        <authorList>
            <person name="Henne A."/>
            <person name="Brueggemann H."/>
            <person name="Raasch C."/>
            <person name="Wiezer A."/>
            <person name="Hartsch T."/>
            <person name="Liesegang H."/>
            <person name="Johann A."/>
            <person name="Lienard T."/>
            <person name="Gohl O."/>
            <person name="Martinez-Arias R."/>
            <person name="Jacobi C."/>
            <person name="Starkuviene V."/>
            <person name="Schlenczeck S."/>
            <person name="Dencker S."/>
            <person name="Huber R."/>
            <person name="Klenk H.-P."/>
            <person name="Kramer W."/>
            <person name="Merkl R."/>
            <person name="Gottschalk G."/>
            <person name="Fritz H.-J."/>
        </authorList>
    </citation>
    <scope>NUCLEOTIDE SEQUENCE [LARGE SCALE GENOMIC DNA]</scope>
    <source>
        <strain>ATCC BAA-163 / DSM 7039 / HB27</strain>
    </source>
</reference>
<sequence>MRHLKSGRKLNRHSSHRLALYRNQAKSLLTHGRITTTVPKAKELRGFVDHLIHLAKRGDLHARRLVLRDLQDVKLVRKLFDEIAPRYRDRQGGYTRVLKLAERRRGDGAPLALVELVE</sequence>
<proteinExistence type="evidence at protein level"/>
<name>RL17_THET2</name>
<feature type="chain" id="PRO_0000267959" description="Large ribosomal subunit protein bL17">
    <location>
        <begin position="1"/>
        <end position="118"/>
    </location>
</feature>